<accession>Q2YKB8</accession>
<proteinExistence type="inferred from homology"/>
<protein>
    <recommendedName>
        <fullName evidence="1">Biotin synthase</fullName>
        <ecNumber evidence="1">2.8.1.6</ecNumber>
    </recommendedName>
</protein>
<comment type="function">
    <text evidence="1">Catalyzes the conversion of dethiobiotin (DTB) to biotin by the insertion of a sulfur atom into dethiobiotin via a radical-based mechanism.</text>
</comment>
<comment type="catalytic activity">
    <reaction evidence="1">
        <text>(4R,5S)-dethiobiotin + (sulfur carrier)-SH + 2 reduced [2Fe-2S]-[ferredoxin] + 2 S-adenosyl-L-methionine = (sulfur carrier)-H + biotin + 2 5'-deoxyadenosine + 2 L-methionine + 2 oxidized [2Fe-2S]-[ferredoxin]</text>
        <dbReference type="Rhea" id="RHEA:22060"/>
        <dbReference type="Rhea" id="RHEA-COMP:10000"/>
        <dbReference type="Rhea" id="RHEA-COMP:10001"/>
        <dbReference type="Rhea" id="RHEA-COMP:14737"/>
        <dbReference type="Rhea" id="RHEA-COMP:14739"/>
        <dbReference type="ChEBI" id="CHEBI:17319"/>
        <dbReference type="ChEBI" id="CHEBI:29917"/>
        <dbReference type="ChEBI" id="CHEBI:33737"/>
        <dbReference type="ChEBI" id="CHEBI:33738"/>
        <dbReference type="ChEBI" id="CHEBI:57586"/>
        <dbReference type="ChEBI" id="CHEBI:57844"/>
        <dbReference type="ChEBI" id="CHEBI:59789"/>
        <dbReference type="ChEBI" id="CHEBI:64428"/>
        <dbReference type="ChEBI" id="CHEBI:149473"/>
        <dbReference type="EC" id="2.8.1.6"/>
    </reaction>
</comment>
<comment type="cofactor">
    <cofactor evidence="1">
        <name>[4Fe-4S] cluster</name>
        <dbReference type="ChEBI" id="CHEBI:49883"/>
    </cofactor>
    <text evidence="1">Binds 1 [4Fe-4S] cluster. The cluster is coordinated with 3 cysteines and an exchangeable S-adenosyl-L-methionine.</text>
</comment>
<comment type="cofactor">
    <cofactor evidence="1">
        <name>[2Fe-2S] cluster</name>
        <dbReference type="ChEBI" id="CHEBI:190135"/>
    </cofactor>
    <text evidence="1">Binds 1 [2Fe-2S] cluster. The cluster is coordinated with 3 cysteines and 1 arginine.</text>
</comment>
<comment type="pathway">
    <text evidence="1">Cofactor biosynthesis; biotin biosynthesis; biotin from 7,8-diaminononanoate: step 2/2.</text>
</comment>
<comment type="subunit">
    <text evidence="1">Homodimer.</text>
</comment>
<comment type="similarity">
    <text evidence="1">Belongs to the radical SAM superfamily. Biotin synthase family.</text>
</comment>
<organism>
    <name type="scientific">Brucella abortus (strain 2308)</name>
    <dbReference type="NCBI Taxonomy" id="359391"/>
    <lineage>
        <taxon>Bacteria</taxon>
        <taxon>Pseudomonadati</taxon>
        <taxon>Pseudomonadota</taxon>
        <taxon>Alphaproteobacteria</taxon>
        <taxon>Hyphomicrobiales</taxon>
        <taxon>Brucellaceae</taxon>
        <taxon>Brucella/Ochrobactrum group</taxon>
        <taxon>Brucella</taxon>
    </lineage>
</organism>
<dbReference type="EC" id="2.8.1.6" evidence="1"/>
<dbReference type="EMBL" id="AM040265">
    <property type="protein sequence ID" value="CAJ12910.1"/>
    <property type="molecule type" value="Genomic_DNA"/>
</dbReference>
<dbReference type="SMR" id="Q2YKB8"/>
<dbReference type="STRING" id="359391.BAB2_0744"/>
<dbReference type="KEGG" id="bmf:BAB2_0744"/>
<dbReference type="HOGENOM" id="CLU_033172_1_2_5"/>
<dbReference type="UniPathway" id="UPA00078">
    <property type="reaction ID" value="UER00162"/>
</dbReference>
<dbReference type="Proteomes" id="UP000002719">
    <property type="component" value="Chromosome II"/>
</dbReference>
<dbReference type="GO" id="GO:0051537">
    <property type="term" value="F:2 iron, 2 sulfur cluster binding"/>
    <property type="evidence" value="ECO:0007669"/>
    <property type="project" value="UniProtKB-KW"/>
</dbReference>
<dbReference type="GO" id="GO:0051539">
    <property type="term" value="F:4 iron, 4 sulfur cluster binding"/>
    <property type="evidence" value="ECO:0007669"/>
    <property type="project" value="UniProtKB-KW"/>
</dbReference>
<dbReference type="GO" id="GO:0004076">
    <property type="term" value="F:biotin synthase activity"/>
    <property type="evidence" value="ECO:0007669"/>
    <property type="project" value="UniProtKB-UniRule"/>
</dbReference>
<dbReference type="GO" id="GO:0005506">
    <property type="term" value="F:iron ion binding"/>
    <property type="evidence" value="ECO:0007669"/>
    <property type="project" value="UniProtKB-UniRule"/>
</dbReference>
<dbReference type="GO" id="GO:0009102">
    <property type="term" value="P:biotin biosynthetic process"/>
    <property type="evidence" value="ECO:0007669"/>
    <property type="project" value="UniProtKB-UniRule"/>
</dbReference>
<dbReference type="CDD" id="cd01335">
    <property type="entry name" value="Radical_SAM"/>
    <property type="match status" value="1"/>
</dbReference>
<dbReference type="Gene3D" id="3.20.20.70">
    <property type="entry name" value="Aldolase class I"/>
    <property type="match status" value="1"/>
</dbReference>
<dbReference type="HAMAP" id="MF_01694">
    <property type="entry name" value="BioB"/>
    <property type="match status" value="1"/>
</dbReference>
<dbReference type="InterPro" id="IPR013785">
    <property type="entry name" value="Aldolase_TIM"/>
</dbReference>
<dbReference type="InterPro" id="IPR010722">
    <property type="entry name" value="BATS_dom"/>
</dbReference>
<dbReference type="InterPro" id="IPR002684">
    <property type="entry name" value="Biotin_synth/BioAB"/>
</dbReference>
<dbReference type="InterPro" id="IPR024177">
    <property type="entry name" value="Biotin_synthase"/>
</dbReference>
<dbReference type="InterPro" id="IPR006638">
    <property type="entry name" value="Elp3/MiaA/NifB-like_rSAM"/>
</dbReference>
<dbReference type="InterPro" id="IPR007197">
    <property type="entry name" value="rSAM"/>
</dbReference>
<dbReference type="NCBIfam" id="TIGR00433">
    <property type="entry name" value="bioB"/>
    <property type="match status" value="1"/>
</dbReference>
<dbReference type="PANTHER" id="PTHR22976">
    <property type="entry name" value="BIOTIN SYNTHASE"/>
    <property type="match status" value="1"/>
</dbReference>
<dbReference type="PANTHER" id="PTHR22976:SF2">
    <property type="entry name" value="BIOTIN SYNTHASE, MITOCHONDRIAL"/>
    <property type="match status" value="1"/>
</dbReference>
<dbReference type="Pfam" id="PF06968">
    <property type="entry name" value="BATS"/>
    <property type="match status" value="1"/>
</dbReference>
<dbReference type="Pfam" id="PF04055">
    <property type="entry name" value="Radical_SAM"/>
    <property type="match status" value="1"/>
</dbReference>
<dbReference type="PIRSF" id="PIRSF001619">
    <property type="entry name" value="Biotin_synth"/>
    <property type="match status" value="1"/>
</dbReference>
<dbReference type="SFLD" id="SFLDF00272">
    <property type="entry name" value="biotin_synthase"/>
    <property type="match status" value="1"/>
</dbReference>
<dbReference type="SFLD" id="SFLDS00029">
    <property type="entry name" value="Radical_SAM"/>
    <property type="match status" value="1"/>
</dbReference>
<dbReference type="SMART" id="SM00876">
    <property type="entry name" value="BATS"/>
    <property type="match status" value="1"/>
</dbReference>
<dbReference type="SMART" id="SM00729">
    <property type="entry name" value="Elp3"/>
    <property type="match status" value="1"/>
</dbReference>
<dbReference type="SUPFAM" id="SSF102114">
    <property type="entry name" value="Radical SAM enzymes"/>
    <property type="match status" value="1"/>
</dbReference>
<dbReference type="PROSITE" id="PS51918">
    <property type="entry name" value="RADICAL_SAM"/>
    <property type="match status" value="1"/>
</dbReference>
<keyword id="KW-0001">2Fe-2S</keyword>
<keyword id="KW-0004">4Fe-4S</keyword>
<keyword id="KW-0093">Biotin biosynthesis</keyword>
<keyword id="KW-0408">Iron</keyword>
<keyword id="KW-0411">Iron-sulfur</keyword>
<keyword id="KW-0479">Metal-binding</keyword>
<keyword id="KW-1185">Reference proteome</keyword>
<keyword id="KW-0949">S-adenosyl-L-methionine</keyword>
<keyword id="KW-0808">Transferase</keyword>
<gene>
    <name evidence="1" type="primary">bioB</name>
    <name type="ordered locus">BAB2_0744</name>
</gene>
<name>BIOB_BRUA2</name>
<feature type="chain" id="PRO_0000381248" description="Biotin synthase">
    <location>
        <begin position="1"/>
        <end position="328"/>
    </location>
</feature>
<feature type="domain" description="Radical SAM core" evidence="2">
    <location>
        <begin position="48"/>
        <end position="275"/>
    </location>
</feature>
<feature type="binding site" evidence="1">
    <location>
        <position position="63"/>
    </location>
    <ligand>
        <name>[4Fe-4S] cluster</name>
        <dbReference type="ChEBI" id="CHEBI:49883"/>
        <note>4Fe-4S-S-AdoMet</note>
    </ligand>
</feature>
<feature type="binding site" evidence="1">
    <location>
        <position position="67"/>
    </location>
    <ligand>
        <name>[4Fe-4S] cluster</name>
        <dbReference type="ChEBI" id="CHEBI:49883"/>
        <note>4Fe-4S-S-AdoMet</note>
    </ligand>
</feature>
<feature type="binding site" evidence="1">
    <location>
        <position position="70"/>
    </location>
    <ligand>
        <name>[4Fe-4S] cluster</name>
        <dbReference type="ChEBI" id="CHEBI:49883"/>
        <note>4Fe-4S-S-AdoMet</note>
    </ligand>
</feature>
<feature type="binding site" evidence="1">
    <location>
        <position position="107"/>
    </location>
    <ligand>
        <name>[2Fe-2S] cluster</name>
        <dbReference type="ChEBI" id="CHEBI:190135"/>
    </ligand>
</feature>
<feature type="binding site" evidence="1">
    <location>
        <position position="138"/>
    </location>
    <ligand>
        <name>[2Fe-2S] cluster</name>
        <dbReference type="ChEBI" id="CHEBI:190135"/>
    </ligand>
</feature>
<feature type="binding site" evidence="1">
    <location>
        <position position="198"/>
    </location>
    <ligand>
        <name>[2Fe-2S] cluster</name>
        <dbReference type="ChEBI" id="CHEBI:190135"/>
    </ligand>
</feature>
<feature type="binding site" evidence="1">
    <location>
        <position position="270"/>
    </location>
    <ligand>
        <name>[2Fe-2S] cluster</name>
        <dbReference type="ChEBI" id="CHEBI:190135"/>
    </ligand>
</feature>
<evidence type="ECO:0000255" key="1">
    <source>
        <dbReference type="HAMAP-Rule" id="MF_01694"/>
    </source>
</evidence>
<evidence type="ECO:0000255" key="2">
    <source>
        <dbReference type="PROSITE-ProRule" id="PRU01266"/>
    </source>
</evidence>
<reference key="1">
    <citation type="journal article" date="2005" name="Infect. Immun.">
        <title>Whole-genome analyses of speciation events in pathogenic Brucellae.</title>
        <authorList>
            <person name="Chain P.S."/>
            <person name="Comerci D.J."/>
            <person name="Tolmasky M.E."/>
            <person name="Larimer F.W."/>
            <person name="Malfatti S.A."/>
            <person name="Vergez L.M."/>
            <person name="Aguero F."/>
            <person name="Land M.L."/>
            <person name="Ugalde R.A."/>
            <person name="Garcia E."/>
        </authorList>
    </citation>
    <scope>NUCLEOTIDE SEQUENCE [LARGE SCALE GENOMIC DNA]</scope>
    <source>
        <strain>2308</strain>
    </source>
</reference>
<sequence length="328" mass="35653">MPDRGGENGASCSVGRWSAEEARAIYNLPFNDLLFRAHGLHRENFDPNRIQLSKLLNIKTGGCPEDCGYCSQSASAENGLKASKLMEIETVLEEARKAKAAGATRYCMGAAWRSPKDRDMPALTHMIESVKAMGLETCMTLGMLDSDKAEKLADAGLDYYNHNIDTSERFYPAVITTRSFEDRLDTLANVRNAGIKVCSGGILGLGEEAEDRIDMLVTLANLPEPPESVPINMLIPMPGTRLAKAAPVDPLEFVRVVALARILMPKSHVRLTAGRTAMSDEMQALCFFAGANSLFMGDTLLTAANPGDDRDSSLLRRLGIQAETEQPA</sequence>